<feature type="chain" id="PRO_1000146060" description="Small ribosomal subunit protein uS10">
    <location>
        <begin position="1"/>
        <end position="102"/>
    </location>
</feature>
<reference key="1">
    <citation type="journal article" date="2011" name="J. Bacteriol.">
        <title>Genome sequence of lineage III Listeria monocytogenes strain HCC23.</title>
        <authorList>
            <person name="Steele C.L."/>
            <person name="Donaldson J.R."/>
            <person name="Paul D."/>
            <person name="Banes M.M."/>
            <person name="Arick T."/>
            <person name="Bridges S.M."/>
            <person name="Lawrence M.L."/>
        </authorList>
    </citation>
    <scope>NUCLEOTIDE SEQUENCE [LARGE SCALE GENOMIC DNA]</scope>
    <source>
        <strain>HCC23</strain>
    </source>
</reference>
<name>RS10_LISMH</name>
<comment type="function">
    <text evidence="1">Involved in the binding of tRNA to the ribosomes.</text>
</comment>
<comment type="subunit">
    <text evidence="1">Part of the 30S ribosomal subunit.</text>
</comment>
<comment type="similarity">
    <text evidence="1">Belongs to the universal ribosomal protein uS10 family.</text>
</comment>
<dbReference type="EMBL" id="CP001175">
    <property type="protein sequence ID" value="ACK41232.1"/>
    <property type="molecule type" value="Genomic_DNA"/>
</dbReference>
<dbReference type="RefSeq" id="WP_003720954.1">
    <property type="nucleotide sequence ID" value="NC_011660.1"/>
</dbReference>
<dbReference type="SMR" id="B8DB07"/>
<dbReference type="GeneID" id="93240514"/>
<dbReference type="KEGG" id="lmh:LMHCC_2901"/>
<dbReference type="HOGENOM" id="CLU_122625_1_3_9"/>
<dbReference type="GO" id="GO:1990904">
    <property type="term" value="C:ribonucleoprotein complex"/>
    <property type="evidence" value="ECO:0007669"/>
    <property type="project" value="UniProtKB-KW"/>
</dbReference>
<dbReference type="GO" id="GO:0005840">
    <property type="term" value="C:ribosome"/>
    <property type="evidence" value="ECO:0007669"/>
    <property type="project" value="UniProtKB-KW"/>
</dbReference>
<dbReference type="GO" id="GO:0003735">
    <property type="term" value="F:structural constituent of ribosome"/>
    <property type="evidence" value="ECO:0007669"/>
    <property type="project" value="InterPro"/>
</dbReference>
<dbReference type="GO" id="GO:0000049">
    <property type="term" value="F:tRNA binding"/>
    <property type="evidence" value="ECO:0007669"/>
    <property type="project" value="UniProtKB-UniRule"/>
</dbReference>
<dbReference type="GO" id="GO:0006412">
    <property type="term" value="P:translation"/>
    <property type="evidence" value="ECO:0007669"/>
    <property type="project" value="UniProtKB-UniRule"/>
</dbReference>
<dbReference type="FunFam" id="3.30.70.600:FF:000001">
    <property type="entry name" value="30S ribosomal protein S10"/>
    <property type="match status" value="1"/>
</dbReference>
<dbReference type="Gene3D" id="3.30.70.600">
    <property type="entry name" value="Ribosomal protein S10 domain"/>
    <property type="match status" value="1"/>
</dbReference>
<dbReference type="HAMAP" id="MF_00508">
    <property type="entry name" value="Ribosomal_uS10"/>
    <property type="match status" value="1"/>
</dbReference>
<dbReference type="InterPro" id="IPR001848">
    <property type="entry name" value="Ribosomal_uS10"/>
</dbReference>
<dbReference type="InterPro" id="IPR018268">
    <property type="entry name" value="Ribosomal_uS10_CS"/>
</dbReference>
<dbReference type="InterPro" id="IPR027486">
    <property type="entry name" value="Ribosomal_uS10_dom"/>
</dbReference>
<dbReference type="InterPro" id="IPR036838">
    <property type="entry name" value="Ribosomal_uS10_dom_sf"/>
</dbReference>
<dbReference type="NCBIfam" id="NF001861">
    <property type="entry name" value="PRK00596.1"/>
    <property type="match status" value="1"/>
</dbReference>
<dbReference type="NCBIfam" id="TIGR01049">
    <property type="entry name" value="rpsJ_bact"/>
    <property type="match status" value="1"/>
</dbReference>
<dbReference type="PANTHER" id="PTHR11700">
    <property type="entry name" value="30S RIBOSOMAL PROTEIN S10 FAMILY MEMBER"/>
    <property type="match status" value="1"/>
</dbReference>
<dbReference type="Pfam" id="PF00338">
    <property type="entry name" value="Ribosomal_S10"/>
    <property type="match status" value="1"/>
</dbReference>
<dbReference type="PRINTS" id="PR00971">
    <property type="entry name" value="RIBOSOMALS10"/>
</dbReference>
<dbReference type="SMART" id="SM01403">
    <property type="entry name" value="Ribosomal_S10"/>
    <property type="match status" value="1"/>
</dbReference>
<dbReference type="SUPFAM" id="SSF54999">
    <property type="entry name" value="Ribosomal protein S10"/>
    <property type="match status" value="1"/>
</dbReference>
<dbReference type="PROSITE" id="PS00361">
    <property type="entry name" value="RIBOSOMAL_S10"/>
    <property type="match status" value="1"/>
</dbReference>
<evidence type="ECO:0000255" key="1">
    <source>
        <dbReference type="HAMAP-Rule" id="MF_00508"/>
    </source>
</evidence>
<evidence type="ECO:0000305" key="2"/>
<sequence>MAKQKIRIRLKAYDHRILDQSAEKIVETAKRSGASVSGPIPLPTEKSIYTVLRAVHKYKDSREQFEMRTHKRLIDIVNPTPQTVDSLMRLDLPSGVDIEIKL</sequence>
<organism>
    <name type="scientific">Listeria monocytogenes serotype 4a (strain HCC23)</name>
    <dbReference type="NCBI Taxonomy" id="552536"/>
    <lineage>
        <taxon>Bacteria</taxon>
        <taxon>Bacillati</taxon>
        <taxon>Bacillota</taxon>
        <taxon>Bacilli</taxon>
        <taxon>Bacillales</taxon>
        <taxon>Listeriaceae</taxon>
        <taxon>Listeria</taxon>
    </lineage>
</organism>
<accession>B8DB07</accession>
<protein>
    <recommendedName>
        <fullName evidence="1">Small ribosomal subunit protein uS10</fullName>
    </recommendedName>
    <alternativeName>
        <fullName evidence="2">30S ribosomal protein S10</fullName>
    </alternativeName>
</protein>
<keyword id="KW-0687">Ribonucleoprotein</keyword>
<keyword id="KW-0689">Ribosomal protein</keyword>
<gene>
    <name evidence="1" type="primary">rpsJ</name>
    <name type="ordered locus">LMHCC_2901</name>
</gene>
<proteinExistence type="inferred from homology"/>